<dbReference type="EMBL" id="M30441">
    <property type="protein sequence ID" value="AAA39716.1"/>
    <property type="molecule type" value="Genomic_DNA"/>
</dbReference>
<dbReference type="EMBL" id="CH466607">
    <property type="protein sequence ID" value="EDL01888.1"/>
    <property type="molecule type" value="Genomic_DNA"/>
</dbReference>
<dbReference type="EMBL" id="BC132349">
    <property type="protein sequence ID" value="AAI32350.1"/>
    <property type="molecule type" value="mRNA"/>
</dbReference>
<dbReference type="EMBL" id="BC137667">
    <property type="protein sequence ID" value="AAI37668.1"/>
    <property type="molecule type" value="mRNA"/>
</dbReference>
<dbReference type="CCDS" id="CCDS17730.1"/>
<dbReference type="PIR" id="C40090">
    <property type="entry name" value="I84205"/>
</dbReference>
<dbReference type="PIR" id="S09044">
    <property type="entry name" value="S09044"/>
</dbReference>
<dbReference type="RefSeq" id="NP_032444.2">
    <property type="nucleotide sequence ID" value="NM_008418.3"/>
</dbReference>
<dbReference type="SMR" id="P16390"/>
<dbReference type="BioGRID" id="200878">
    <property type="interactions" value="212"/>
</dbReference>
<dbReference type="FunCoup" id="P16390">
    <property type="interactions" value="387"/>
</dbReference>
<dbReference type="IntAct" id="P16390">
    <property type="interactions" value="1"/>
</dbReference>
<dbReference type="STRING" id="10090.ENSMUSP00000050680"/>
<dbReference type="BindingDB" id="P16390"/>
<dbReference type="ChEMBL" id="CHEMBL4818"/>
<dbReference type="GuidetoPHARMACOLOGY" id="540"/>
<dbReference type="GlyCosmos" id="P16390">
    <property type="glycosylation" value="1 site, No reported glycans"/>
</dbReference>
<dbReference type="GlyGen" id="P16390">
    <property type="glycosylation" value="2 sites, 1 O-linked glycan (1 site)"/>
</dbReference>
<dbReference type="iPTMnet" id="P16390"/>
<dbReference type="PhosphoSitePlus" id="P16390"/>
<dbReference type="jPOST" id="P16390"/>
<dbReference type="PaxDb" id="10090-ENSMUSP00000050680"/>
<dbReference type="PeptideAtlas" id="P16390"/>
<dbReference type="ProteomicsDB" id="269196"/>
<dbReference type="ABCD" id="P16390">
    <property type="antibodies" value="1 sequenced antibody"/>
</dbReference>
<dbReference type="Antibodypedia" id="33788">
    <property type="antibodies" value="377 antibodies from 36 providers"/>
</dbReference>
<dbReference type="DNASU" id="16491"/>
<dbReference type="Ensembl" id="ENSMUST00000052718.5">
    <property type="protein sequence ID" value="ENSMUSP00000050680.4"/>
    <property type="gene ID" value="ENSMUSG00000047959.5"/>
</dbReference>
<dbReference type="GeneID" id="16491"/>
<dbReference type="KEGG" id="mmu:16491"/>
<dbReference type="UCSC" id="uc008qwp.2">
    <property type="organism name" value="mouse"/>
</dbReference>
<dbReference type="AGR" id="MGI:96660"/>
<dbReference type="CTD" id="3738"/>
<dbReference type="MGI" id="MGI:96660">
    <property type="gene designation" value="Kcna3"/>
</dbReference>
<dbReference type="VEuPathDB" id="HostDB:ENSMUSG00000047959"/>
<dbReference type="eggNOG" id="KOG1545">
    <property type="taxonomic scope" value="Eukaryota"/>
</dbReference>
<dbReference type="GeneTree" id="ENSGT00940000160210"/>
<dbReference type="HOGENOM" id="CLU_011722_4_0_1"/>
<dbReference type="InParanoid" id="P16390"/>
<dbReference type="OMA" id="INHSAFK"/>
<dbReference type="OrthoDB" id="415460at2759"/>
<dbReference type="PhylomeDB" id="P16390"/>
<dbReference type="TreeFam" id="TF313103"/>
<dbReference type="Reactome" id="R-MMU-1296072">
    <property type="pathway name" value="Voltage gated Potassium channels"/>
</dbReference>
<dbReference type="BioGRID-ORCS" id="16491">
    <property type="hits" value="0 hits in 76 CRISPR screens"/>
</dbReference>
<dbReference type="CD-CODE" id="CE726F99">
    <property type="entry name" value="Postsynaptic density"/>
</dbReference>
<dbReference type="PRO" id="PR:P16390"/>
<dbReference type="Proteomes" id="UP000000589">
    <property type="component" value="Chromosome 3"/>
</dbReference>
<dbReference type="RNAct" id="P16390">
    <property type="molecule type" value="protein"/>
</dbReference>
<dbReference type="Bgee" id="ENSMUSG00000047959">
    <property type="expression patterns" value="Expressed in embryonic brain and 72 other cell types or tissues"/>
</dbReference>
<dbReference type="GO" id="GO:0030424">
    <property type="term" value="C:axon"/>
    <property type="evidence" value="ECO:0000314"/>
    <property type="project" value="UniProtKB"/>
</dbReference>
<dbReference type="GO" id="GO:0005886">
    <property type="term" value="C:plasma membrane"/>
    <property type="evidence" value="ECO:0000314"/>
    <property type="project" value="UniProtKB"/>
</dbReference>
<dbReference type="GO" id="GO:0008076">
    <property type="term" value="C:voltage-gated potassium channel complex"/>
    <property type="evidence" value="ECO:0007669"/>
    <property type="project" value="InterPro"/>
</dbReference>
<dbReference type="GO" id="GO:0005249">
    <property type="term" value="F:voltage-gated potassium channel activity"/>
    <property type="evidence" value="ECO:0000314"/>
    <property type="project" value="UniProtKB"/>
</dbReference>
<dbReference type="GO" id="GO:0051260">
    <property type="term" value="P:protein homooligomerization"/>
    <property type="evidence" value="ECO:0007669"/>
    <property type="project" value="InterPro"/>
</dbReference>
<dbReference type="FunFam" id="1.10.287.70:FF:000002">
    <property type="entry name" value="Potassium voltage-gated channel subfamily a member"/>
    <property type="match status" value="1"/>
</dbReference>
<dbReference type="FunFam" id="3.30.710.10:FF:000007">
    <property type="entry name" value="Potassium voltage-gated channel subfamily A member 2"/>
    <property type="match status" value="1"/>
</dbReference>
<dbReference type="FunFam" id="1.20.120.350:FF:000021">
    <property type="entry name" value="Potassium voltage-gated channel subfamily A member 3"/>
    <property type="match status" value="1"/>
</dbReference>
<dbReference type="Gene3D" id="1.10.287.70">
    <property type="match status" value="1"/>
</dbReference>
<dbReference type="Gene3D" id="3.30.710.10">
    <property type="entry name" value="Potassium Channel Kv1.1, Chain A"/>
    <property type="match status" value="1"/>
</dbReference>
<dbReference type="Gene3D" id="1.20.120.350">
    <property type="entry name" value="Voltage-gated potassium channels. Chain C"/>
    <property type="match status" value="1"/>
</dbReference>
<dbReference type="InterPro" id="IPR000210">
    <property type="entry name" value="BTB/POZ_dom"/>
</dbReference>
<dbReference type="InterPro" id="IPR005821">
    <property type="entry name" value="Ion_trans_dom"/>
</dbReference>
<dbReference type="InterPro" id="IPR003968">
    <property type="entry name" value="K_chnl_volt-dep_Kv"/>
</dbReference>
<dbReference type="InterPro" id="IPR003972">
    <property type="entry name" value="K_chnl_volt-dep_Kv1"/>
</dbReference>
<dbReference type="InterPro" id="IPR004050">
    <property type="entry name" value="K_chnl_volt-dep_Kv1.3"/>
</dbReference>
<dbReference type="InterPro" id="IPR011333">
    <property type="entry name" value="SKP1/BTB/POZ_sf"/>
</dbReference>
<dbReference type="InterPro" id="IPR003131">
    <property type="entry name" value="T1-type_BTB"/>
</dbReference>
<dbReference type="InterPro" id="IPR028325">
    <property type="entry name" value="VG_K_chnl"/>
</dbReference>
<dbReference type="InterPro" id="IPR027359">
    <property type="entry name" value="Volt_channel_dom_sf"/>
</dbReference>
<dbReference type="PANTHER" id="PTHR11537:SF28">
    <property type="entry name" value="POTASSIUM VOLTAGE-GATED CHANNEL SUBFAMILY A MEMBER 3"/>
    <property type="match status" value="1"/>
</dbReference>
<dbReference type="PANTHER" id="PTHR11537">
    <property type="entry name" value="VOLTAGE-GATED POTASSIUM CHANNEL"/>
    <property type="match status" value="1"/>
</dbReference>
<dbReference type="Pfam" id="PF02214">
    <property type="entry name" value="BTB_2"/>
    <property type="match status" value="1"/>
</dbReference>
<dbReference type="Pfam" id="PF00520">
    <property type="entry name" value="Ion_trans"/>
    <property type="match status" value="1"/>
</dbReference>
<dbReference type="PRINTS" id="PR00169">
    <property type="entry name" value="KCHANNEL"/>
</dbReference>
<dbReference type="PRINTS" id="PR01510">
    <property type="entry name" value="KV13CHANNEL"/>
</dbReference>
<dbReference type="PRINTS" id="PR01491">
    <property type="entry name" value="KVCHANNEL"/>
</dbReference>
<dbReference type="PRINTS" id="PR01496">
    <property type="entry name" value="SHAKERCHANEL"/>
</dbReference>
<dbReference type="SMART" id="SM00225">
    <property type="entry name" value="BTB"/>
    <property type="match status" value="1"/>
</dbReference>
<dbReference type="SUPFAM" id="SSF54695">
    <property type="entry name" value="POZ domain"/>
    <property type="match status" value="1"/>
</dbReference>
<dbReference type="SUPFAM" id="SSF81324">
    <property type="entry name" value="Voltage-gated potassium channels"/>
    <property type="match status" value="1"/>
</dbReference>
<comment type="function">
    <text evidence="6 7">Mediates the voltage-dependent potassium ion permeability of excitable membranes. Assuming opened or closed conformations in response to the voltage difference across the membrane, the protein forms a potassium-selective channel through which potassium ions may pass in accordance with their electrochemical gradient.</text>
</comment>
<comment type="catalytic activity">
    <reaction evidence="6 7">
        <text>K(+)(in) = K(+)(out)</text>
        <dbReference type="Rhea" id="RHEA:29463"/>
        <dbReference type="ChEBI" id="CHEBI:29103"/>
    </reaction>
</comment>
<comment type="activity regulation">
    <text evidence="6">Activity is up-regulated by JAK2.</text>
</comment>
<comment type="subunit">
    <text evidence="1 7">Homotetramer (By similarity). Forms heterooligomers with KCNE4 which inhibits KCNA3 activity by impairing localization to the cell membrane (PubMed:27802162). The stoichiometry of KCNA3 and KCNE4 in the heterooligomers are 4:1, 4:2, 4:3 or 4:4 respectively. Increasing the number of KCNE4 subunits steadily slows the activation KCNA3 and decreases its abundance at the cell membrane. However, a single subunit of KCNE4 is sufficient for the cooperative enhancement of the inactivating function of the channel. Interacts with SEC24D; this interaction is reduced in the presence of KCNE4. Interacts with DLG1, DLG2 and DLG4 via their PDZ domains (By similarity).</text>
</comment>
<comment type="subcellular location">
    <subcellularLocation>
        <location evidence="6">Cell membrane</location>
        <topology evidence="3">Multi-pass membrane protein</topology>
    </subcellularLocation>
</comment>
<comment type="induction">
    <text evidence="5">Up-regulated by lipopolysaccharide and down-regulated by dexamethasone.</text>
</comment>
<comment type="domain">
    <text>The N-terminus may be important in determining the rate of inactivation of the channel while the tail may play a role in modulation of channel activity and/or targeting of the channel to specific subcellular compartments.</text>
</comment>
<comment type="domain">
    <text>The segment S4 is probably the voltage-sensor and is characterized by a series of positively charged amino acids at every third position.</text>
</comment>
<comment type="PTM">
    <text evidence="1">N-glycosylation promotes the cell surface expression.</text>
</comment>
<comment type="PTM">
    <text evidence="1">Phosphorylation on Tyr-452 inhibits its channel activity.</text>
</comment>
<comment type="similarity">
    <text evidence="8">Belongs to the potassium channel family. A (Shaker) (TC 1.A.1.2) subfamily. Kv1.3/KCNA3 sub-subfamily.</text>
</comment>
<gene>
    <name type="primary">Kcna3</name>
</gene>
<protein>
    <recommendedName>
        <fullName>Potassium voltage-gated channel subfamily A member 3</fullName>
    </recommendedName>
    <alternativeName>
        <fullName>MK3</fullName>
    </alternativeName>
    <alternativeName>
        <fullName>Voltage-gated potassium channel subunit Kv1.3</fullName>
    </alternativeName>
</protein>
<feature type="chain" id="PRO_0000053978" description="Potassium voltage-gated channel subfamily A member 3">
    <location>
        <begin position="1"/>
        <end position="528"/>
    </location>
</feature>
<feature type="topological domain" description="Cytoplasmic" evidence="3">
    <location>
        <begin position="1"/>
        <end position="187"/>
    </location>
</feature>
<feature type="transmembrane region" description="Helical; Name=Segment S1" evidence="3">
    <location>
        <begin position="188"/>
        <end position="206"/>
    </location>
</feature>
<feature type="topological domain" description="Extracellular" evidence="3">
    <location>
        <begin position="207"/>
        <end position="247"/>
    </location>
</feature>
<feature type="transmembrane region" description="Helical; Name=Segment S2" evidence="3">
    <location>
        <begin position="248"/>
        <end position="269"/>
    </location>
</feature>
<feature type="topological domain" description="Cytoplasmic" evidence="3">
    <location>
        <begin position="270"/>
        <end position="280"/>
    </location>
</feature>
<feature type="transmembrane region" description="Helical; Name=Segment S3" evidence="3">
    <location>
        <begin position="281"/>
        <end position="301"/>
    </location>
</feature>
<feature type="topological domain" description="Extracellular" evidence="3">
    <location>
        <begin position="302"/>
        <end position="315"/>
    </location>
</feature>
<feature type="transmembrane region" description="Helical; Voltage-sensor; Name=Segment S4" evidence="3">
    <location>
        <begin position="316"/>
        <end position="334"/>
    </location>
</feature>
<feature type="topological domain" description="Cytoplasmic" evidence="3">
    <location>
        <begin position="335"/>
        <end position="350"/>
    </location>
</feature>
<feature type="transmembrane region" description="Helical; Name=Segment S5" evidence="3">
    <location>
        <begin position="351"/>
        <end position="370"/>
    </location>
</feature>
<feature type="topological domain" description="Extracellular" evidence="3">
    <location>
        <begin position="371"/>
        <end position="411"/>
    </location>
</feature>
<feature type="transmembrane region" description="Helical; Name=Segment S6" evidence="3">
    <location>
        <begin position="412"/>
        <end position="434"/>
    </location>
</feature>
<feature type="topological domain" description="Cytoplasmic" evidence="3">
    <location>
        <begin position="435"/>
        <end position="528"/>
    </location>
</feature>
<feature type="region of interest" description="Disordered" evidence="4">
    <location>
        <begin position="1"/>
        <end position="32"/>
    </location>
</feature>
<feature type="region of interest" description="Interaction with KCNE4" evidence="1">
    <location>
        <begin position="435"/>
        <end position="528"/>
    </location>
</feature>
<feature type="short sequence motif" description="Selectivity filter" evidence="2">
    <location>
        <begin position="397"/>
        <end position="402"/>
    </location>
</feature>
<feature type="short sequence motif" description="PDZ-binding" evidence="1">
    <location>
        <begin position="526"/>
        <end position="528"/>
    </location>
</feature>
<feature type="compositionally biased region" description="Gly residues" evidence="4">
    <location>
        <begin position="15"/>
        <end position="32"/>
    </location>
</feature>
<feature type="modified residue" description="Phosphotyrosine" evidence="1">
    <location>
        <position position="452"/>
    </location>
</feature>
<feature type="modified residue" description="Phosphoserine; by PKA" evidence="3">
    <location>
        <position position="473"/>
    </location>
</feature>
<feature type="lipid moiety-binding region" description="S-palmitoyl cysteine" evidence="3">
    <location>
        <position position="270"/>
    </location>
</feature>
<feature type="glycosylation site" description="N-linked (GlcNAc...) asparagine" evidence="3">
    <location>
        <position position="232"/>
    </location>
</feature>
<feature type="sequence conflict" description="In Ref. 1; AAA39716." evidence="8" ref="1">
    <original>V</original>
    <variation>A</variation>
    <location>
        <position position="369"/>
    </location>
</feature>
<feature type="sequence conflict" description="In Ref. 1; AAA39716." evidence="8" ref="1">
    <original>H</original>
    <variation>Q</variation>
    <location>
        <position position="492"/>
    </location>
</feature>
<reference key="1">
    <citation type="journal article" date="1990" name="Science">
        <title>A family of three mouse potassium channel genes with intronless coding regions.</title>
        <authorList>
            <person name="Chandy K.G."/>
            <person name="Williams C.B."/>
            <person name="Spencer R.H."/>
            <person name="Aguilar B.A."/>
            <person name="Ghanshani S."/>
            <person name="Tempel B.L."/>
            <person name="Gutman G.A."/>
        </authorList>
    </citation>
    <scope>NUCLEOTIDE SEQUENCE [GENOMIC DNA]</scope>
</reference>
<reference key="2">
    <citation type="submission" date="2005-07" db="EMBL/GenBank/DDBJ databases">
        <authorList>
            <person name="Mural R.J."/>
            <person name="Adams M.D."/>
            <person name="Myers E.W."/>
            <person name="Smith H.O."/>
            <person name="Venter J.C."/>
        </authorList>
    </citation>
    <scope>NUCLEOTIDE SEQUENCE [LARGE SCALE GENOMIC DNA]</scope>
</reference>
<reference key="3">
    <citation type="journal article" date="2004" name="Genome Res.">
        <title>The status, quality, and expansion of the NIH full-length cDNA project: the Mammalian Gene Collection (MGC).</title>
        <authorList>
            <consortium name="The MGC Project Team"/>
        </authorList>
    </citation>
    <scope>NUCLEOTIDE SEQUENCE [LARGE SCALE MRNA]</scope>
    <source>
        <tissue>Brain</tissue>
    </source>
</reference>
<reference key="4">
    <citation type="journal article" date="2010" name="Cell">
        <title>A tissue-specific atlas of mouse protein phosphorylation and expression.</title>
        <authorList>
            <person name="Huttlin E.L."/>
            <person name="Jedrychowski M.P."/>
            <person name="Elias J.E."/>
            <person name="Goswami T."/>
            <person name="Rad R."/>
            <person name="Beausoleil S.A."/>
            <person name="Villen J."/>
            <person name="Haas W."/>
            <person name="Sowa M.E."/>
            <person name="Gygi S.P."/>
        </authorList>
    </citation>
    <scope>IDENTIFICATION BY MASS SPECTROMETRY [LARGE SCALE ANALYSIS]</scope>
    <source>
        <tissue>Brain</tissue>
    </source>
</reference>
<reference key="5">
    <citation type="journal article" date="2009" name="J. Cell Sci.">
        <title>KCNE4 suppresses Kv1.3 currents by modulating trafficking, surface expression and channel gating.</title>
        <authorList>
            <person name="Sole L."/>
            <person name="Roura-Ferrer M."/>
            <person name="Perez-Verdaguer M."/>
            <person name="Oliveras A."/>
            <person name="Calvo M."/>
            <person name="Fernandez-Fernandez J.M."/>
            <person name="Felipe A."/>
        </authorList>
    </citation>
    <scope>INDUCTION</scope>
</reference>
<reference key="6">
    <citation type="journal article" date="2015" name="J. Membr. Biol.">
        <title>Up-regulation of Kv1.3 channels by janus kinase 2.</title>
        <authorList>
            <person name="Hosseinzadeh Z."/>
            <person name="Warsi J."/>
            <person name="Elvira B."/>
            <person name="Almilaji A."/>
            <person name="Shumilina E."/>
            <person name="Lang F."/>
        </authorList>
    </citation>
    <scope>FUNCTION</scope>
    <scope>TRANSPORTER ACTIVITY</scope>
    <scope>SUBCELLULAR LOCATION</scope>
    <scope>ACTIVITY REGULATION</scope>
</reference>
<reference key="7">
    <citation type="journal article" date="2016" name="J. Cell Sci.">
        <title>The C-terminal domain of Kv1.3 regulates functional interactions with the KCNE4 subunit.</title>
        <authorList>
            <person name="Sole L."/>
            <person name="Roig S.R."/>
            <person name="Vallejo-Gracia A."/>
            <person name="Serrano-Albarras A."/>
            <person name="Martinez-Marmol R."/>
            <person name="Tamkun M.M."/>
            <person name="Felipe A."/>
        </authorList>
    </citation>
    <scope>FUNCTION</scope>
    <scope>TRANSPORTER ACTIVITY</scope>
    <scope>SUBUNIT</scope>
    <scope>INTERACTION WITH KCEN4</scope>
</reference>
<evidence type="ECO:0000250" key="1">
    <source>
        <dbReference type="UniProtKB" id="P15384"/>
    </source>
</evidence>
<evidence type="ECO:0000250" key="2">
    <source>
        <dbReference type="UniProtKB" id="P63142"/>
    </source>
</evidence>
<evidence type="ECO:0000255" key="3"/>
<evidence type="ECO:0000256" key="4">
    <source>
        <dbReference type="SAM" id="MobiDB-lite"/>
    </source>
</evidence>
<evidence type="ECO:0000269" key="5">
    <source>
    </source>
</evidence>
<evidence type="ECO:0000269" key="6">
    <source>
    </source>
</evidence>
<evidence type="ECO:0000269" key="7">
    <source>
    </source>
</evidence>
<evidence type="ECO:0000305" key="8"/>
<sequence length="528" mass="58564">MTVVPGDHLLEPEAAGGGGGDPPQGGCGSGGGGGGCDRYEPLPPALPAAGEQDCCGERVVINISGLRFETQLKTLCQFPETLLGDPKRRMRYFDPLRNEYFFDRNRPSFDAILYYYQSGGRIRRPVNVPIDIFSEEIRFYQLGEEAMEKFREDEGFLREEERPLPRRDFQRQVWLLFEYPESSGPARGIAIVSVLVILISIVIFCLETLPEFRDEKDYPASPSQDVFEAANNSTSGAPSGASSFSDPFFVVETLCIIWFSFELLVRFFACPSKATFSRNIMNLIDIVAIIPYFITLGTELAERQGNGQQAMSLAILRVIRLVRVFRIFKLSRHSKGLQILGQTLKASMRELGLLIFFLFIGVILFSSAVYFAEADDPSSGFNSIPDAFWWAVVTMTTVGYGDMHPVTIGGKIVGSLCAIAGVLTIALPVPVIVSNFNYFYHRETEGEEQAQYMHVGSCQHLSSSAEELRKARSNSTLSKSEYMVIEEGGMNHSAFPQTPFKTGNSTATCTTNNNPNSCVNIKKIFTDV</sequence>
<accession>P16390</accession>
<accession>A3KMM2</accession>
<organism>
    <name type="scientific">Mus musculus</name>
    <name type="common">Mouse</name>
    <dbReference type="NCBI Taxonomy" id="10090"/>
    <lineage>
        <taxon>Eukaryota</taxon>
        <taxon>Metazoa</taxon>
        <taxon>Chordata</taxon>
        <taxon>Craniata</taxon>
        <taxon>Vertebrata</taxon>
        <taxon>Euteleostomi</taxon>
        <taxon>Mammalia</taxon>
        <taxon>Eutheria</taxon>
        <taxon>Euarchontoglires</taxon>
        <taxon>Glires</taxon>
        <taxon>Rodentia</taxon>
        <taxon>Myomorpha</taxon>
        <taxon>Muroidea</taxon>
        <taxon>Muridae</taxon>
        <taxon>Murinae</taxon>
        <taxon>Mus</taxon>
        <taxon>Mus</taxon>
    </lineage>
</organism>
<name>KCNA3_MOUSE</name>
<keyword id="KW-1003">Cell membrane</keyword>
<keyword id="KW-0325">Glycoprotein</keyword>
<keyword id="KW-0407">Ion channel</keyword>
<keyword id="KW-0406">Ion transport</keyword>
<keyword id="KW-0449">Lipoprotein</keyword>
<keyword id="KW-0472">Membrane</keyword>
<keyword id="KW-0564">Palmitate</keyword>
<keyword id="KW-0597">Phosphoprotein</keyword>
<keyword id="KW-0630">Potassium</keyword>
<keyword id="KW-0631">Potassium channel</keyword>
<keyword id="KW-0633">Potassium transport</keyword>
<keyword id="KW-1185">Reference proteome</keyword>
<keyword id="KW-0812">Transmembrane</keyword>
<keyword id="KW-1133">Transmembrane helix</keyword>
<keyword id="KW-0813">Transport</keyword>
<keyword id="KW-0851">Voltage-gated channel</keyword>
<proteinExistence type="evidence at protein level"/>